<protein>
    <recommendedName>
        <fullName evidence="10">Phosphatidate cytidylyltransferase 1</fullName>
        <ecNumber evidence="5 6 8 9">2.7.7.41</ecNumber>
    </recommendedName>
    <alternativeName>
        <fullName>CDP-DAG synthase 1</fullName>
    </alternativeName>
    <alternativeName>
        <fullName>CDP-DG synthase 1</fullName>
    </alternativeName>
    <alternativeName>
        <fullName>CDP-diacylglycerol synthase 1</fullName>
        <shortName>CDS 1</shortName>
    </alternativeName>
    <alternativeName>
        <fullName>CDP-diglyceride pyrophosphorylase 1</fullName>
    </alternativeName>
    <alternativeName>
        <fullName>CDP-diglyceride synthase 1</fullName>
    </alternativeName>
    <alternativeName>
        <fullName>CTP:phosphatidate cytidylyltransferase 1</fullName>
    </alternativeName>
</protein>
<proteinExistence type="evidence at protein level"/>
<evidence type="ECO:0000250" key="1">
    <source>
        <dbReference type="UniProtKB" id="P98191"/>
    </source>
</evidence>
<evidence type="ECO:0000250" key="2">
    <source>
        <dbReference type="UniProtKB" id="Q92903"/>
    </source>
</evidence>
<evidence type="ECO:0000255" key="3"/>
<evidence type="ECO:0000256" key="4">
    <source>
        <dbReference type="SAM" id="MobiDB-lite"/>
    </source>
</evidence>
<evidence type="ECO:0000269" key="5">
    <source>
    </source>
</evidence>
<evidence type="ECO:0000269" key="6">
    <source>
    </source>
</evidence>
<evidence type="ECO:0000269" key="7">
    <source>
    </source>
</evidence>
<evidence type="ECO:0000269" key="8">
    <source>
    </source>
</evidence>
<evidence type="ECO:0000269" key="9">
    <source>
    </source>
</evidence>
<evidence type="ECO:0000305" key="10"/>
<evidence type="ECO:0000305" key="11">
    <source>
    </source>
</evidence>
<evidence type="ECO:0000312" key="12">
    <source>
        <dbReference type="RGD" id="621185"/>
    </source>
</evidence>
<evidence type="ECO:0007744" key="13">
    <source>
    </source>
</evidence>
<name>CDS1_RAT</name>
<feature type="chain" id="PRO_0000090715" description="Phosphatidate cytidylyltransferase 1">
    <location>
        <begin position="1"/>
        <end position="461"/>
    </location>
</feature>
<feature type="transmembrane region" description="Helical" evidence="3">
    <location>
        <begin position="96"/>
        <end position="116"/>
    </location>
</feature>
<feature type="transmembrane region" description="Helical" evidence="3">
    <location>
        <begin position="149"/>
        <end position="169"/>
    </location>
</feature>
<feature type="transmembrane region" description="Helical" evidence="3">
    <location>
        <begin position="183"/>
        <end position="203"/>
    </location>
</feature>
<feature type="transmembrane region" description="Helical" evidence="3">
    <location>
        <begin position="230"/>
        <end position="250"/>
    </location>
</feature>
<feature type="transmembrane region" description="Helical" evidence="3">
    <location>
        <begin position="279"/>
        <end position="299"/>
    </location>
</feature>
<feature type="transmembrane region" description="Helical" evidence="3">
    <location>
        <begin position="357"/>
        <end position="377"/>
    </location>
</feature>
<feature type="region of interest" description="Disordered" evidence="4">
    <location>
        <begin position="1"/>
        <end position="68"/>
    </location>
</feature>
<feature type="compositionally biased region" description="Basic and acidic residues" evidence="4">
    <location>
        <begin position="22"/>
        <end position="56"/>
    </location>
</feature>
<feature type="modified residue" description="Omega-N-methylarginine" evidence="1">
    <location>
        <position position="7"/>
    </location>
</feature>
<feature type="modified residue" description="Phosphoserine" evidence="13">
    <location>
        <position position="35"/>
    </location>
</feature>
<feature type="modified residue" description="Phosphoserine" evidence="13">
    <location>
        <position position="37"/>
    </location>
</feature>
<feature type="sequence conflict" description="In Ref. 2; BAA28787." evidence="10" ref="2">
    <original>R</original>
    <variation>K</variation>
    <location>
        <position position="172"/>
    </location>
</feature>
<feature type="sequence conflict" description="In Ref. 1; BAA22085." evidence="10" ref="1">
    <original>SKYQYFVCPV</original>
    <variation>VQVSVLCGARW</variation>
    <location>
        <begin position="299"/>
        <end position="308"/>
    </location>
</feature>
<feature type="sequence conflict" description="In Ref. 2; BAA28787." evidence="10" ref="2">
    <original>L</original>
    <variation>V</variation>
    <location>
        <position position="326"/>
    </location>
</feature>
<dbReference type="EC" id="2.7.7.41" evidence="5 6 8 9"/>
<dbReference type="EMBL" id="AB000517">
    <property type="protein sequence ID" value="BAA22085.1"/>
    <property type="molecule type" value="mRNA"/>
</dbReference>
<dbReference type="EMBL" id="AB009999">
    <property type="protein sequence ID" value="BAA28787.1"/>
    <property type="molecule type" value="mRNA"/>
</dbReference>
<dbReference type="EMBL" id="BC127492">
    <property type="protein sequence ID" value="AAI27493.1"/>
    <property type="molecule type" value="mRNA"/>
</dbReference>
<dbReference type="RefSeq" id="NP_112521.2">
    <property type="nucleotide sequence ID" value="NM_031242.2"/>
</dbReference>
<dbReference type="FunCoup" id="O35052">
    <property type="interactions" value="2831"/>
</dbReference>
<dbReference type="STRING" id="10116.ENSRNOP00000002918"/>
<dbReference type="GlyGen" id="O35052">
    <property type="glycosylation" value="1 site"/>
</dbReference>
<dbReference type="iPTMnet" id="O35052"/>
<dbReference type="PhosphoSitePlus" id="O35052"/>
<dbReference type="PaxDb" id="10116-ENSRNOP00000002918"/>
<dbReference type="Ensembl" id="ENSRNOT00000002918.7">
    <property type="protein sequence ID" value="ENSRNOP00000002918.3"/>
    <property type="gene ID" value="ENSRNOG00000002142.7"/>
</dbReference>
<dbReference type="GeneID" id="81925"/>
<dbReference type="KEGG" id="rno:81925"/>
<dbReference type="AGR" id="RGD:621185"/>
<dbReference type="CTD" id="1040"/>
<dbReference type="RGD" id="621185">
    <property type="gene designation" value="Cds1"/>
</dbReference>
<dbReference type="eggNOG" id="KOG1440">
    <property type="taxonomic scope" value="Eukaryota"/>
</dbReference>
<dbReference type="GeneTree" id="ENSGT00940000158223"/>
<dbReference type="HOGENOM" id="CLU_023471_0_1_1"/>
<dbReference type="InParanoid" id="O35052"/>
<dbReference type="OMA" id="FFAYMYF"/>
<dbReference type="OrthoDB" id="10260889at2759"/>
<dbReference type="PhylomeDB" id="O35052"/>
<dbReference type="TreeFam" id="TF313464"/>
<dbReference type="BRENDA" id="2.7.7.41">
    <property type="organism ID" value="5301"/>
</dbReference>
<dbReference type="Reactome" id="R-RNO-1483226">
    <property type="pathway name" value="Synthesis of PI"/>
</dbReference>
<dbReference type="UniPathway" id="UPA00557">
    <property type="reaction ID" value="UER00614"/>
</dbReference>
<dbReference type="PRO" id="PR:O35052"/>
<dbReference type="Proteomes" id="UP000002494">
    <property type="component" value="Chromosome 14"/>
</dbReference>
<dbReference type="Bgee" id="ENSRNOG00000002142">
    <property type="expression patterns" value="Expressed in duodenum and 19 other cell types or tissues"/>
</dbReference>
<dbReference type="GO" id="GO:0005783">
    <property type="term" value="C:endoplasmic reticulum"/>
    <property type="evidence" value="ECO:0000266"/>
    <property type="project" value="RGD"/>
</dbReference>
<dbReference type="GO" id="GO:0005789">
    <property type="term" value="C:endoplasmic reticulum membrane"/>
    <property type="evidence" value="ECO:0000314"/>
    <property type="project" value="RGD"/>
</dbReference>
<dbReference type="GO" id="GO:0016020">
    <property type="term" value="C:membrane"/>
    <property type="evidence" value="ECO:0000314"/>
    <property type="project" value="UniProtKB"/>
</dbReference>
<dbReference type="GO" id="GO:0004605">
    <property type="term" value="F:phosphatidate cytidylyltransferase activity"/>
    <property type="evidence" value="ECO:0000314"/>
    <property type="project" value="UniProtKB"/>
</dbReference>
<dbReference type="GO" id="GO:0016024">
    <property type="term" value="P:CDP-diacylglycerol biosynthetic process"/>
    <property type="evidence" value="ECO:0000250"/>
    <property type="project" value="UniProtKB"/>
</dbReference>
<dbReference type="GO" id="GO:0140042">
    <property type="term" value="P:lipid droplet formation"/>
    <property type="evidence" value="ECO:0000250"/>
    <property type="project" value="UniProtKB"/>
</dbReference>
<dbReference type="GO" id="GO:0006661">
    <property type="term" value="P:phosphatidylinositol biosynthetic process"/>
    <property type="evidence" value="ECO:0000250"/>
    <property type="project" value="UniProtKB"/>
</dbReference>
<dbReference type="GO" id="GO:0045600">
    <property type="term" value="P:positive regulation of fat cell differentiation"/>
    <property type="evidence" value="ECO:0000250"/>
    <property type="project" value="UniProtKB"/>
</dbReference>
<dbReference type="InterPro" id="IPR000374">
    <property type="entry name" value="PC_trans"/>
</dbReference>
<dbReference type="InterPro" id="IPR016720">
    <property type="entry name" value="PC_Trfase_euk"/>
</dbReference>
<dbReference type="PANTHER" id="PTHR13773">
    <property type="entry name" value="PHOSPHATIDATE CYTIDYLYLTRANSFERASE"/>
    <property type="match status" value="1"/>
</dbReference>
<dbReference type="PANTHER" id="PTHR13773:SF16">
    <property type="entry name" value="PHOSPHATIDATE CYTIDYLYLTRANSFERASE 1"/>
    <property type="match status" value="1"/>
</dbReference>
<dbReference type="Pfam" id="PF01148">
    <property type="entry name" value="CTP_transf_1"/>
    <property type="match status" value="1"/>
</dbReference>
<dbReference type="PIRSF" id="PIRSF018269">
    <property type="entry name" value="PC_trans_euk"/>
    <property type="match status" value="1"/>
</dbReference>
<dbReference type="PROSITE" id="PS01315">
    <property type="entry name" value="CDS"/>
    <property type="match status" value="1"/>
</dbReference>
<comment type="function">
    <text evidence="1 2 5 6 8 9">Catalyzes the conversion of phosphatidic acid (PA) to CDP-diacylglycerol (CDP-DAG), an essential intermediate in the synthesis of phosphatidylglycerol, cardiolipin and phosphatidylinositol (PubMed:29253589, PubMed:30862571, PubMed:9083091, PubMed:9345289). Exhibits almost no acyl chain preference for PA, showing no discrimination for the sn-1/sn-2 acyl chain composition of PAs (By similarity). Plays an important role in regulatinng the growth of lipid droplets which are storage organelles at the center of lipid and energy homeostasis (By similarity). Positively regulates the differentiation and development of adipocytes (By similarity).</text>
</comment>
<comment type="catalytic activity">
    <reaction evidence="5 6 8 9">
        <text>a 1,2-diacyl-sn-glycero-3-phosphate + CTP + H(+) = a CDP-1,2-diacyl-sn-glycerol + diphosphate</text>
        <dbReference type="Rhea" id="RHEA:16229"/>
        <dbReference type="ChEBI" id="CHEBI:15378"/>
        <dbReference type="ChEBI" id="CHEBI:33019"/>
        <dbReference type="ChEBI" id="CHEBI:37563"/>
        <dbReference type="ChEBI" id="CHEBI:58332"/>
        <dbReference type="ChEBI" id="CHEBI:58608"/>
        <dbReference type="EC" id="2.7.7.41"/>
    </reaction>
    <physiologicalReaction direction="left-to-right" evidence="11">
        <dbReference type="Rhea" id="RHEA:16230"/>
    </physiologicalReaction>
</comment>
<comment type="catalytic activity">
    <reaction evidence="2">
        <text>1-octadecanoyl-2-(5Z,8Z,11Z,14Z-eicosatetraenoyl)-sn-glycero-3-phosphate + CTP + H(+) = 1-octadecanoyl-2-(5Z,8Z,11Z,14Z-eicosatetraenoyl)-sn-glycero-3-cytidine-5'-diphosphate + diphosphate</text>
        <dbReference type="Rhea" id="RHEA:45648"/>
        <dbReference type="ChEBI" id="CHEBI:15378"/>
        <dbReference type="ChEBI" id="CHEBI:33019"/>
        <dbReference type="ChEBI" id="CHEBI:37563"/>
        <dbReference type="ChEBI" id="CHEBI:77091"/>
        <dbReference type="ChEBI" id="CHEBI:85349"/>
    </reaction>
    <physiologicalReaction direction="left-to-right" evidence="2">
        <dbReference type="Rhea" id="RHEA:45649"/>
    </physiologicalReaction>
</comment>
<comment type="catalytic activity">
    <reaction evidence="2">
        <text>1-octadecanoyl-2-(9Z,12Z-octadecadienoyl)-sn-glycero-3-phosphate + CTP + H(+) = 1-octadecanoyl-2-(9Z,12Z-octadecadienoyl)-sn-glycero-3-cytidine-5'-diphosphate + diphosphate</text>
        <dbReference type="Rhea" id="RHEA:45660"/>
        <dbReference type="ChEBI" id="CHEBI:15378"/>
        <dbReference type="ChEBI" id="CHEBI:33019"/>
        <dbReference type="ChEBI" id="CHEBI:37563"/>
        <dbReference type="ChEBI" id="CHEBI:77098"/>
        <dbReference type="ChEBI" id="CHEBI:85352"/>
    </reaction>
    <physiologicalReaction direction="left-to-right" evidence="2">
        <dbReference type="Rhea" id="RHEA:45661"/>
    </physiologicalReaction>
</comment>
<comment type="catalytic activity">
    <reaction evidence="2">
        <text>1-hexadecanoyl-2-(5Z,8Z,11Z,14Z-eicosatetraenoyl)-sn-glycero-3-phosphate + CTP + H(+) = 1-hexadecanoyl-2-(5Z,8Z,11Z,14Z-eicosatetraenoyl)-sn-glycero-3-cytidine-5'-diphosphate + diphosphate</text>
        <dbReference type="Rhea" id="RHEA:45652"/>
        <dbReference type="ChEBI" id="CHEBI:15378"/>
        <dbReference type="ChEBI" id="CHEBI:33019"/>
        <dbReference type="ChEBI" id="CHEBI:37563"/>
        <dbReference type="ChEBI" id="CHEBI:72864"/>
        <dbReference type="ChEBI" id="CHEBI:85350"/>
    </reaction>
    <physiologicalReaction direction="left-to-right" evidence="2">
        <dbReference type="Rhea" id="RHEA:45653"/>
    </physiologicalReaction>
</comment>
<comment type="catalytic activity">
    <reaction evidence="2">
        <text>1,2-di-(5Z,8Z,11Z,14Z)-eicosatetraenoyl-sn-glycero-3-phosphate + CTP + H(+) = 1,2-di-(5Z,8Z,11Z,14Z-eicosatetraenoyl)-sn-glycero-3-cytidine-5'-diphosphate + diphosphate</text>
        <dbReference type="Rhea" id="RHEA:45656"/>
        <dbReference type="ChEBI" id="CHEBI:15378"/>
        <dbReference type="ChEBI" id="CHEBI:33019"/>
        <dbReference type="ChEBI" id="CHEBI:37563"/>
        <dbReference type="ChEBI" id="CHEBI:77126"/>
        <dbReference type="ChEBI" id="CHEBI:85351"/>
    </reaction>
    <physiologicalReaction direction="left-to-right" evidence="2">
        <dbReference type="Rhea" id="RHEA:45657"/>
    </physiologicalReaction>
</comment>
<comment type="catalytic activity">
    <reaction evidence="2">
        <text>1-octadecanoyl-2-(9Z-octadecenoyl)-sn-glycero-3-phosphate + CTP + H(+) = 1-octadecanoyl-2-(9Z-octadecenoyl)-sn-glycero-3-cytidine-5'-diphosphate + diphosphate</text>
        <dbReference type="Rhea" id="RHEA:45664"/>
        <dbReference type="ChEBI" id="CHEBI:15378"/>
        <dbReference type="ChEBI" id="CHEBI:33019"/>
        <dbReference type="ChEBI" id="CHEBI:37563"/>
        <dbReference type="ChEBI" id="CHEBI:74560"/>
        <dbReference type="ChEBI" id="CHEBI:85353"/>
    </reaction>
    <physiologicalReaction direction="left-to-right" evidence="2">
        <dbReference type="Rhea" id="RHEA:45665"/>
    </physiologicalReaction>
</comment>
<comment type="catalytic activity">
    <reaction evidence="2">
        <text>1-octadecanoyl-2-(4Z,7Z,10Z,13Z,16Z,19Z-docosahexaenoyl)-sn-glycero-3-phosphate + CTP + H(+) = 1-octadecanoyl-2-(4Z,7Z,10Z,13Z,16Z,19Z-docosahexaenoyl)-sn-glycero-3-cytidine-5'-diphosphate + diphosphate</text>
        <dbReference type="Rhea" id="RHEA:45668"/>
        <dbReference type="ChEBI" id="CHEBI:15378"/>
        <dbReference type="ChEBI" id="CHEBI:33019"/>
        <dbReference type="ChEBI" id="CHEBI:37563"/>
        <dbReference type="ChEBI" id="CHEBI:77130"/>
        <dbReference type="ChEBI" id="CHEBI:85354"/>
    </reaction>
    <physiologicalReaction direction="left-to-right" evidence="2">
        <dbReference type="Rhea" id="RHEA:45669"/>
    </physiologicalReaction>
</comment>
<comment type="catalytic activity">
    <reaction evidence="2">
        <text>1,2-di-(9Z,12Z-octadecadienoyl)-sn-glycero-3-phosphate + CTP + H(+) = 1,2-di-(9Z,12Z-octadecadienoyl)-sn-glycero-3-cytidine-5'-diphosphate + diphosphate</text>
        <dbReference type="Rhea" id="RHEA:45672"/>
        <dbReference type="ChEBI" id="CHEBI:15378"/>
        <dbReference type="ChEBI" id="CHEBI:33019"/>
        <dbReference type="ChEBI" id="CHEBI:37563"/>
        <dbReference type="ChEBI" id="CHEBI:77128"/>
        <dbReference type="ChEBI" id="CHEBI:85355"/>
    </reaction>
    <physiologicalReaction direction="left-to-right" evidence="2">
        <dbReference type="Rhea" id="RHEA:45673"/>
    </physiologicalReaction>
</comment>
<comment type="catalytic activity">
    <reaction evidence="2">
        <text>1,2-di-(9Z-octadecenoyl)-sn-glycero-3-phosphate + CTP + H(+) = 1,2-di-(9Z-octadecenoyl)-sn-glycero-3-cytidine-5'-diphosphate + diphosphate</text>
        <dbReference type="Rhea" id="RHEA:45676"/>
        <dbReference type="ChEBI" id="CHEBI:15378"/>
        <dbReference type="ChEBI" id="CHEBI:33019"/>
        <dbReference type="ChEBI" id="CHEBI:37563"/>
        <dbReference type="ChEBI" id="CHEBI:74546"/>
        <dbReference type="ChEBI" id="CHEBI:85356"/>
    </reaction>
    <physiologicalReaction direction="left-to-right" evidence="2">
        <dbReference type="Rhea" id="RHEA:45677"/>
    </physiologicalReaction>
</comment>
<comment type="cofactor">
    <cofactor evidence="9">
        <name>Mg(2+)</name>
        <dbReference type="ChEBI" id="CHEBI:18420"/>
    </cofactor>
</comment>
<comment type="activity regulation">
    <text evidence="8 9">Activated by GTP. Inhibited by CDP-diacylglycerol and by phosphatidylglycerol 4,5-bisphosphate (PPI2).</text>
</comment>
<comment type="biophysicochemical properties">
    <kinetics>
        <KM evidence="8">102 uM for 1-stearoyl-2-arachidonoyl-sn-glycero-3-phosphate</KM>
        <KM evidence="8">114 uM for 1,2-dioleoyl-sn-glycero-3-phosphate</KM>
        <KM evidence="8">138 uM for phosphatidic acid</KM>
        <Vmax evidence="8">268.0 pmol/min/mg enzyme for 1-stearoyl-2-arachidonoyl-sn-glycero-3-phosphate</Vmax>
        <Vmax evidence="8">259.0 pmol/min/mg enzyme for 1,2-dioleoyl-sn-glycero-3-phosphate</Vmax>
        <Vmax evidence="8">198.0 pmol/min/mg enzyme for phosphatidic acid</Vmax>
    </kinetics>
</comment>
<comment type="pathway">
    <text>Phospholipid metabolism; CDP-diacylglycerol biosynthesis; CDP-diacylglycerol from sn-glycerol 3-phosphate: step 3/3.</text>
</comment>
<comment type="subunit">
    <text evidence="1 5">Homodimer (PubMed:29253589). Interacts with FOS; this interaction may enhance catalytic activity (By similarity).</text>
</comment>
<comment type="subcellular location">
    <subcellularLocation>
        <location evidence="5 7 8">Endoplasmic reticulum membrane</location>
        <topology evidence="3">Multi-pass membrane protein</topology>
    </subcellularLocation>
</comment>
<comment type="tissue specificity">
    <text evidence="8">Brain, retina and testis. Found in cerebellar Purkinje cells, pineal body, inner segment of photoreceptor cells and postmitotic spermatocytes and spermatids.</text>
</comment>
<comment type="similarity">
    <text evidence="10">Belongs to the CDS family.</text>
</comment>
<organism>
    <name type="scientific">Rattus norvegicus</name>
    <name type="common">Rat</name>
    <dbReference type="NCBI Taxonomy" id="10116"/>
    <lineage>
        <taxon>Eukaryota</taxon>
        <taxon>Metazoa</taxon>
        <taxon>Chordata</taxon>
        <taxon>Craniata</taxon>
        <taxon>Vertebrata</taxon>
        <taxon>Euteleostomi</taxon>
        <taxon>Mammalia</taxon>
        <taxon>Eutheria</taxon>
        <taxon>Euarchontoglires</taxon>
        <taxon>Glires</taxon>
        <taxon>Rodentia</taxon>
        <taxon>Myomorpha</taxon>
        <taxon>Muroidea</taxon>
        <taxon>Muridae</taxon>
        <taxon>Murinae</taxon>
        <taxon>Rattus</taxon>
    </lineage>
</organism>
<gene>
    <name evidence="12" type="primary">Cds1</name>
    <name type="synonym">Cds</name>
</gene>
<keyword id="KW-0256">Endoplasmic reticulum</keyword>
<keyword id="KW-0444">Lipid biosynthesis</keyword>
<keyword id="KW-0443">Lipid metabolism</keyword>
<keyword id="KW-0460">Magnesium</keyword>
<keyword id="KW-0472">Membrane</keyword>
<keyword id="KW-0488">Methylation</keyword>
<keyword id="KW-0548">Nucleotidyltransferase</keyword>
<keyword id="KW-0594">Phospholipid biosynthesis</keyword>
<keyword id="KW-1208">Phospholipid metabolism</keyword>
<keyword id="KW-0597">Phosphoprotein</keyword>
<keyword id="KW-1185">Reference proteome</keyword>
<keyword id="KW-0808">Transferase</keyword>
<keyword id="KW-0812">Transmembrane</keyword>
<keyword id="KW-1133">Transmembrane helix</keyword>
<reference key="1">
    <citation type="journal article" date="1997" name="J. Biol. Chem.">
        <title>Gene cloning and characterization of CDP-diacylglycerol synthase from rat brain.</title>
        <authorList>
            <person name="Saito S."/>
            <person name="Goto K."/>
            <person name="Tonosaki A."/>
            <person name="Kondo H."/>
        </authorList>
    </citation>
    <scope>NUCLEOTIDE SEQUENCE [MRNA]</scope>
    <scope>FUNCTION</scope>
    <scope>CATALYTIC ACTIVITY</scope>
    <scope>ACTIVITY REGULATION</scope>
    <scope>SUBCELLULAR LOCATION</scope>
    <scope>TISSUE SPECIFICITY</scope>
    <scope>BIOPHYSICOCHEMICAL PROPERTIES</scope>
    <source>
        <strain>Wistar</strain>
        <tissue>Brain</tissue>
    </source>
</reference>
<reference key="2">
    <citation type="submission" date="1997-12" db="EMBL/GenBank/DDBJ databases">
        <title>Rat brain CDP-diacylglycerol synthase.</title>
        <authorList>
            <person name="Hosaka K."/>
            <person name="Imai H."/>
            <person name="Nikawa J."/>
        </authorList>
    </citation>
    <scope>NUCLEOTIDE SEQUENCE [MRNA]</scope>
    <source>
        <strain>Wistar</strain>
        <tissue>Brain</tissue>
    </source>
</reference>
<reference key="3">
    <citation type="journal article" date="2004" name="Genome Res.">
        <title>The status, quality, and expansion of the NIH full-length cDNA project: the Mammalian Gene Collection (MGC).</title>
        <authorList>
            <consortium name="The MGC Project Team"/>
        </authorList>
    </citation>
    <scope>NUCLEOTIDE SEQUENCE [LARGE SCALE MRNA]</scope>
    <source>
        <tissue>Liver</tissue>
    </source>
</reference>
<reference key="4">
    <citation type="journal article" date="1981" name="Biochim. Biophys. Acta">
        <title>Topography of glycerolipid synthetic enzymes. Synthesis of phosphatidylserine, phosphatidylinositol and glycerolipid intermediates occurs on the cytoplasmic surface of rat liver microsomal vesicles.</title>
        <authorList>
            <person name="Ballas L.M."/>
            <person name="Bell R.M."/>
        </authorList>
    </citation>
    <scope>SUBCELLULAR LOCATION</scope>
</reference>
<reference key="5">
    <citation type="journal article" date="1997" name="Biochem. Biophys. Res. Commun.">
        <title>Extraction and stabilization of mammalian CDP-diacylglycerol synthase activity.</title>
        <authorList>
            <person name="Monaco M.E."/>
            <person name="Feldman M."/>
        </authorList>
    </citation>
    <scope>FUNCTION</scope>
    <scope>CATALYTIC ACTIVITY</scope>
    <scope>ACTIVITY REGULATION</scope>
    <scope>COFACTOR</scope>
    <source>
        <tissue>Liver</tissue>
    </source>
</reference>
<reference key="6">
    <citation type="journal article" date="2012" name="Nat. Commun.">
        <title>Quantitative maps of protein phosphorylation sites across 14 different rat organs and tissues.</title>
        <authorList>
            <person name="Lundby A."/>
            <person name="Secher A."/>
            <person name="Lage K."/>
            <person name="Nordsborg N.B."/>
            <person name="Dmytriyev A."/>
            <person name="Lundby C."/>
            <person name="Olsen J.V."/>
        </authorList>
    </citation>
    <scope>PHOSPHORYLATION [LARGE SCALE ANALYSIS] AT SER-35 AND SER-37</scope>
    <scope>IDENTIFICATION BY MASS SPECTROMETRY [LARGE SCALE ANALYSIS]</scope>
</reference>
<reference key="7">
    <citation type="journal article" date="2018" name="Biochim. Biophys. Acta">
        <title>Mitochondrial CDP-diacylglycerol synthase activity is due to the peripheral protein, TAMM41 and not due to the integral membrane protein, CDP-diacylglycerol synthase 1.</title>
        <authorList>
            <person name="Blunsom N.J."/>
            <person name="Gomez-Espinosa E."/>
            <person name="Ashlin T.G."/>
            <person name="Cockcroft S."/>
        </authorList>
    </citation>
    <scope>FUNCTION</scope>
    <scope>CATALYTIC ACTIVITY</scope>
    <scope>SUBUNIT</scope>
    <scope>SUBCELLULAR LOCATION</scope>
</reference>
<reference key="8">
    <citation type="journal article" date="2019" name="Biochim. Biophys. Acta">
        <title>Sustained phospholipase C stimulation of H9c2 cardiomyoblasts by vasopressin induces an increase in CDP-diacylglycerol synthase 1 (CDS1) through protein kinase C and cFos.</title>
        <authorList>
            <person name="Blunsom N.J."/>
            <person name="Gomez-Espinosa E."/>
            <person name="Ashlin T.G."/>
            <person name="Cockcroft S."/>
        </authorList>
    </citation>
    <scope>FUNCTION</scope>
    <scope>CATALYTIC ACTIVITY</scope>
    <scope>INDUCTION</scope>
</reference>
<sequence>MLELRHRGGCPGPGGAGTPPPREGEAAGGDHETESTSDKETDIDDRYGDLDARGDSDVPEVPPSSDRTPEILKKALSGLSSRWKNWWIRGILTLTMISLFFLIIYMGSFMLMLLVLGIQVKCFQEIITIGYRVYHSYDLPWFRTLSWYFLLCVNYFFYGETVADYFATFVQREEQLQFLIRYHRFISFALYLAGFCMFVLSLVKKHYRLQFYMFAWTHVTLLITVTQSHLVIQNLFEGMIWFLVPISSVICNDITAYLFGFFFGRTPLIKLSPKKTWEGFIGGFFSTVIFGFIAAYVLSKYQYFVCPVEYRSDVNSFVTECEPSELFQLQNYSLPPFLQAVLSRETVSLYPFQIHSIALSTFASLIGPFGGFFASGFKRAFKIKDFANTIPGHGGIMDRFDCQYLMATFVHVYITSFIRGPNPSKVLQQLLVLQPEQQLNIYRTLKIHLTEKGILQPTWKV</sequence>
<accession>O35052</accession>
<accession>A0JPL6</accession>
<accession>O88208</accession>